<proteinExistence type="evidence at transcript level"/>
<accession>Q21279</accession>
<comment type="function">
    <text evidence="4 5 6">Probable polyglutamylase that forms polyglutamate side chains on tubulin (PubMed:27635036). Probably acts when complexed with other proteins (PubMed:27635036). Appears to be dispensable for polar spindle formation in dividing embryonic cells, for cilia-dependent osmotic avoidance and for male mating behavior (PubMed:27635036). Regulates microtubule dynamics in uterine muscle cells (PubMed:24780738).</text>
</comment>
<comment type="tissue specificity">
    <text evidence="3">Expressed in hypodermis and pharyngeal muscles.</text>
</comment>
<comment type="developmental stage">
    <text evidence="5">Expressed in embryos and adults.</text>
</comment>
<comment type="disruption phenotype">
    <text evidence="4">RNAi-mediated knockdown at the L1 larval stage causes a reduction in egg-laying, likely due to a defect in the egg-laying apparatus muscles.</text>
</comment>
<comment type="similarity">
    <text evidence="7">Belongs to the tubulin--tyrosine ligase family.</text>
</comment>
<evidence type="ECO:0000250" key="1">
    <source>
        <dbReference type="UniProtKB" id="Q6ZT98"/>
    </source>
</evidence>
<evidence type="ECO:0000255" key="2">
    <source>
        <dbReference type="PROSITE-ProRule" id="PRU00568"/>
    </source>
</evidence>
<evidence type="ECO:0000269" key="3">
    <source>
    </source>
</evidence>
<evidence type="ECO:0000269" key="4">
    <source>
    </source>
</evidence>
<evidence type="ECO:0000269" key="5">
    <source>
    </source>
</evidence>
<evidence type="ECO:0000303" key="6">
    <source>
    </source>
</evidence>
<evidence type="ECO:0000305" key="7"/>
<evidence type="ECO:0000312" key="8">
    <source>
        <dbReference type="EMBL" id="CAA94900.3"/>
    </source>
</evidence>
<evidence type="ECO:0000312" key="9">
    <source>
        <dbReference type="Proteomes" id="UP000001940"/>
    </source>
</evidence>
<evidence type="ECO:0000312" key="10">
    <source>
        <dbReference type="WormBase" id="K07C5.7"/>
    </source>
</evidence>
<sequence length="513" mass="59523">MGLLDSKLCMMILAVSVLIIDINFEARIGTFFDLRLRTSYFKKSSSPLLSHTDSEEDLNYLSKHEDKRPVAIVTGSYESAHTGHMMHIREMFEHTGYKIVTKNELSLDTKWDVMWHHEYSFTQEPFKTLIKNASPNQIVNHVPGSGFYTSKVQLATSDLSNGVPKAFQLPAEKSKLLEYAEKNPDVLWVQKDNTHRNIKIKSTNDMDLSKNNSFVQKFVDNPLLIDNKKFDIGIYTVVTSLLPLRVYIYDGDVLIRFCPEDYHPFDANNVDKYVVGDDYTPIWEINSLKKYFNTQKMSFKSTIDSYLGMQGMDTSKIWLQIRNIIGEVFRTQQTKMLMSLQNLKLNPQYFELSRFDFVVDDQLNVFLMEANMSPNLSSGHFKQNQILYEQVLMNIFSLTGISTPITKEADILFKSRTSEQNPLVNSRDINLPLKFCVENKCESCDEAPECQLCGHCMNTETRKILEQTFVENSNRKQMKRIQFDYENHHPLTKEDHLLTLWLSTKCQLDNTWC</sequence>
<keyword id="KW-0067">ATP-binding</keyword>
<keyword id="KW-0436">Ligase</keyword>
<keyword id="KW-0547">Nucleotide-binding</keyword>
<keyword id="KW-1185">Reference proteome</keyword>
<dbReference type="EC" id="6.-.-.-" evidence="2"/>
<dbReference type="EMBL" id="BX284605">
    <property type="protein sequence ID" value="CAA94900.3"/>
    <property type="molecule type" value="Genomic_DNA"/>
</dbReference>
<dbReference type="RefSeq" id="NP_505663.3">
    <property type="nucleotide sequence ID" value="NM_073262.5"/>
</dbReference>
<dbReference type="SMR" id="Q21279"/>
<dbReference type="FunCoup" id="Q21279">
    <property type="interactions" value="15"/>
</dbReference>
<dbReference type="STRING" id="6239.K07C5.7.1"/>
<dbReference type="PaxDb" id="6239-K07C5.7"/>
<dbReference type="PeptideAtlas" id="Q21279"/>
<dbReference type="EnsemblMetazoa" id="K07C5.7.1">
    <property type="protein sequence ID" value="K07C5.7.1"/>
    <property type="gene ID" value="WBGene00010630"/>
</dbReference>
<dbReference type="GeneID" id="187090"/>
<dbReference type="KEGG" id="cel:CELE_K07C5.7"/>
<dbReference type="UCSC" id="K07C5.7">
    <property type="organism name" value="c. elegans"/>
</dbReference>
<dbReference type="AGR" id="WB:WBGene00010630"/>
<dbReference type="CTD" id="187090"/>
<dbReference type="WormBase" id="K07C5.7">
    <property type="protein sequence ID" value="CE41580"/>
    <property type="gene ID" value="WBGene00010630"/>
    <property type="gene designation" value="ttll-15"/>
</dbReference>
<dbReference type="eggNOG" id="KOG2156">
    <property type="taxonomic scope" value="Eukaryota"/>
</dbReference>
<dbReference type="GeneTree" id="ENSGT00390000006352"/>
<dbReference type="HOGENOM" id="CLU_038007_0_0_1"/>
<dbReference type="InParanoid" id="Q21279"/>
<dbReference type="OMA" id="CGYITNK"/>
<dbReference type="OrthoDB" id="202825at2759"/>
<dbReference type="PhylomeDB" id="Q21279"/>
<dbReference type="PRO" id="PR:Q21279"/>
<dbReference type="Proteomes" id="UP000001940">
    <property type="component" value="Chromosome V"/>
</dbReference>
<dbReference type="Bgee" id="WBGene00010630">
    <property type="expression patterns" value="Expressed in larva and 2 other cell types or tissues"/>
</dbReference>
<dbReference type="GO" id="GO:0005524">
    <property type="term" value="F:ATP binding"/>
    <property type="evidence" value="ECO:0007669"/>
    <property type="project" value="UniProtKB-KW"/>
</dbReference>
<dbReference type="GO" id="GO:0016874">
    <property type="term" value="F:ligase activity"/>
    <property type="evidence" value="ECO:0007669"/>
    <property type="project" value="UniProtKB-KW"/>
</dbReference>
<dbReference type="GO" id="GO:0018991">
    <property type="term" value="P:egg-laying behavior"/>
    <property type="evidence" value="ECO:0000315"/>
    <property type="project" value="WormBase"/>
</dbReference>
<dbReference type="GO" id="GO:0036211">
    <property type="term" value="P:protein modification process"/>
    <property type="evidence" value="ECO:0007669"/>
    <property type="project" value="InterPro"/>
</dbReference>
<dbReference type="Gene3D" id="3.30.470.20">
    <property type="entry name" value="ATP-grasp fold, B domain"/>
    <property type="match status" value="1"/>
</dbReference>
<dbReference type="InterPro" id="IPR004344">
    <property type="entry name" value="TTL/TTLL_fam"/>
</dbReference>
<dbReference type="InterPro" id="IPR053317">
    <property type="entry name" value="Tubulin_polyglutamylase"/>
</dbReference>
<dbReference type="PANTHER" id="PTHR47113">
    <property type="entry name" value="LD09343P"/>
    <property type="match status" value="1"/>
</dbReference>
<dbReference type="PANTHER" id="PTHR47113:SF1">
    <property type="entry name" value="LD09343P"/>
    <property type="match status" value="1"/>
</dbReference>
<dbReference type="Pfam" id="PF03133">
    <property type="entry name" value="TTL"/>
    <property type="match status" value="1"/>
</dbReference>
<dbReference type="SUPFAM" id="SSF56059">
    <property type="entry name" value="Glutathione synthetase ATP-binding domain-like"/>
    <property type="match status" value="1"/>
</dbReference>
<dbReference type="PROSITE" id="PS51221">
    <property type="entry name" value="TTL"/>
    <property type="match status" value="1"/>
</dbReference>
<name>TTL15_CAEEL</name>
<gene>
    <name evidence="10" type="primary">ttll-15</name>
    <name evidence="8" type="ORF">K07C5.7</name>
</gene>
<feature type="chain" id="PRO_0000447858" description="Probable tubulin polyglutamylase ttll-15">
    <location>
        <begin position="1"/>
        <end position="513"/>
    </location>
</feature>
<feature type="domain" description="TTL" evidence="2">
    <location>
        <begin position="73"/>
        <end position="411"/>
    </location>
</feature>
<feature type="binding site" evidence="1">
    <location>
        <begin position="216"/>
        <end position="219"/>
    </location>
    <ligand>
        <name>ATP</name>
        <dbReference type="ChEBI" id="CHEBI:30616"/>
    </ligand>
</feature>
<feature type="binding site" evidence="1">
    <location>
        <position position="229"/>
    </location>
    <ligand>
        <name>ATP</name>
        <dbReference type="ChEBI" id="CHEBI:30616"/>
    </ligand>
</feature>
<feature type="binding site" evidence="1">
    <location>
        <position position="231"/>
    </location>
    <ligand>
        <name>ATP</name>
        <dbReference type="ChEBI" id="CHEBI:30616"/>
    </ligand>
</feature>
<reference evidence="9" key="1">
    <citation type="journal article" date="1998" name="Science">
        <title>Genome sequence of the nematode C. elegans: a platform for investigating biology.</title>
        <authorList>
            <consortium name="The C. elegans sequencing consortium"/>
        </authorList>
    </citation>
    <scope>NUCLEOTIDE SEQUENCE [LARGE SCALE GENOMIC DNA]</scope>
    <source>
        <strain evidence="9">Bristol N2</strain>
    </source>
</reference>
<reference evidence="7" key="2">
    <citation type="journal article" date="2010" name="J. Biol. Chem.">
        <title>Identification of tubulin deglutamylase among Caenorhabditis elegans and mammalian cytosolic carboxypeptidases (CCPs).</title>
        <authorList>
            <person name="Kimura Y."/>
            <person name="Kurabe N."/>
            <person name="Ikegami K."/>
            <person name="Tsutsumi K."/>
            <person name="Konishi Y."/>
            <person name="Kaplan O.I."/>
            <person name="Kunitomo H."/>
            <person name="Iino Y."/>
            <person name="Blacque O.E."/>
            <person name="Setou M."/>
        </authorList>
    </citation>
    <scope>TISSUE SPECIFICITY</scope>
</reference>
<reference evidence="7" key="3">
    <citation type="journal article" date="2014" name="Dev. Cell">
        <title>In situ imaging in C. elegans reveals developmental regulation of microtubule dynamics.</title>
        <authorList>
            <person name="Lacroix B."/>
            <person name="Bourdages K.G."/>
            <person name="Dorn J.F."/>
            <person name="Ihara S."/>
            <person name="Sherwood D.R."/>
            <person name="Maddox P.S."/>
            <person name="Maddox A.S."/>
        </authorList>
    </citation>
    <scope>FUNCTION</scope>
    <scope>DISRUPTION PHENOTYPE</scope>
</reference>
<reference evidence="7" key="4">
    <citation type="journal article" date="2016" name="Biol. Open">
        <title>Caenorhabditis elegans glutamylating enzymes function redundantly in male mating.</title>
        <authorList>
            <person name="Chawla D.G."/>
            <person name="Shah R.V."/>
            <person name="Barth Z.K."/>
            <person name="Lee J.D."/>
            <person name="Badecker K.E."/>
            <person name="Naik A."/>
            <person name="Brewster M.M."/>
            <person name="Salmon T.P."/>
            <person name="Peel N."/>
        </authorList>
    </citation>
    <scope>FUNCTION</scope>
    <scope>DEVELOPMENTAL STAGE</scope>
</reference>
<organism evidence="9">
    <name type="scientific">Caenorhabditis elegans</name>
    <dbReference type="NCBI Taxonomy" id="6239"/>
    <lineage>
        <taxon>Eukaryota</taxon>
        <taxon>Metazoa</taxon>
        <taxon>Ecdysozoa</taxon>
        <taxon>Nematoda</taxon>
        <taxon>Chromadorea</taxon>
        <taxon>Rhabditida</taxon>
        <taxon>Rhabditina</taxon>
        <taxon>Rhabditomorpha</taxon>
        <taxon>Rhabditoidea</taxon>
        <taxon>Rhabditidae</taxon>
        <taxon>Peloderinae</taxon>
        <taxon>Caenorhabditis</taxon>
    </lineage>
</organism>
<protein>
    <recommendedName>
        <fullName evidence="7">Probable tubulin polyglutamylase ttll-15</fullName>
        <ecNumber evidence="2">6.-.-.-</ecNumber>
    </recommendedName>
    <alternativeName>
        <fullName evidence="10">Tubulin--tyrosine ligase-like protein 15</fullName>
    </alternativeName>
</protein>